<feature type="chain" id="PRO_1000114109" description="Aminomethyltransferase">
    <location>
        <begin position="1"/>
        <end position="364"/>
    </location>
</feature>
<gene>
    <name evidence="1" type="primary">gcvT</name>
    <name type="ordered locus">SeAg_B3213</name>
</gene>
<protein>
    <recommendedName>
        <fullName evidence="1">Aminomethyltransferase</fullName>
        <ecNumber evidence="1">2.1.2.10</ecNumber>
    </recommendedName>
    <alternativeName>
        <fullName evidence="1">Glycine cleavage system T protein</fullName>
    </alternativeName>
</protein>
<comment type="function">
    <text evidence="1">The glycine cleavage system catalyzes the degradation of glycine.</text>
</comment>
<comment type="catalytic activity">
    <reaction evidence="1">
        <text>N(6)-[(R)-S(8)-aminomethyldihydrolipoyl]-L-lysyl-[protein] + (6S)-5,6,7,8-tetrahydrofolate = N(6)-[(R)-dihydrolipoyl]-L-lysyl-[protein] + (6R)-5,10-methylene-5,6,7,8-tetrahydrofolate + NH4(+)</text>
        <dbReference type="Rhea" id="RHEA:16945"/>
        <dbReference type="Rhea" id="RHEA-COMP:10475"/>
        <dbReference type="Rhea" id="RHEA-COMP:10492"/>
        <dbReference type="ChEBI" id="CHEBI:15636"/>
        <dbReference type="ChEBI" id="CHEBI:28938"/>
        <dbReference type="ChEBI" id="CHEBI:57453"/>
        <dbReference type="ChEBI" id="CHEBI:83100"/>
        <dbReference type="ChEBI" id="CHEBI:83143"/>
        <dbReference type="EC" id="2.1.2.10"/>
    </reaction>
</comment>
<comment type="subunit">
    <text evidence="1">The glycine cleavage system is composed of four proteins: P, T, L and H.</text>
</comment>
<comment type="similarity">
    <text evidence="1">Belongs to the GcvT family.</text>
</comment>
<organism>
    <name type="scientific">Salmonella agona (strain SL483)</name>
    <dbReference type="NCBI Taxonomy" id="454166"/>
    <lineage>
        <taxon>Bacteria</taxon>
        <taxon>Pseudomonadati</taxon>
        <taxon>Pseudomonadota</taxon>
        <taxon>Gammaproteobacteria</taxon>
        <taxon>Enterobacterales</taxon>
        <taxon>Enterobacteriaceae</taxon>
        <taxon>Salmonella</taxon>
    </lineage>
</organism>
<dbReference type="EC" id="2.1.2.10" evidence="1"/>
<dbReference type="EMBL" id="CP001138">
    <property type="protein sequence ID" value="ACH52737.1"/>
    <property type="molecule type" value="Genomic_DNA"/>
</dbReference>
<dbReference type="RefSeq" id="WP_000068738.1">
    <property type="nucleotide sequence ID" value="NC_011149.1"/>
</dbReference>
<dbReference type="SMR" id="B5F5I0"/>
<dbReference type="KEGG" id="sea:SeAg_B3213"/>
<dbReference type="HOGENOM" id="CLU_007884_10_2_6"/>
<dbReference type="Proteomes" id="UP000008819">
    <property type="component" value="Chromosome"/>
</dbReference>
<dbReference type="GO" id="GO:0005829">
    <property type="term" value="C:cytosol"/>
    <property type="evidence" value="ECO:0007669"/>
    <property type="project" value="TreeGrafter"/>
</dbReference>
<dbReference type="GO" id="GO:0005960">
    <property type="term" value="C:glycine cleavage complex"/>
    <property type="evidence" value="ECO:0007669"/>
    <property type="project" value="InterPro"/>
</dbReference>
<dbReference type="GO" id="GO:0004047">
    <property type="term" value="F:aminomethyltransferase activity"/>
    <property type="evidence" value="ECO:0007669"/>
    <property type="project" value="UniProtKB-UniRule"/>
</dbReference>
<dbReference type="GO" id="GO:0008483">
    <property type="term" value="F:transaminase activity"/>
    <property type="evidence" value="ECO:0007669"/>
    <property type="project" value="UniProtKB-KW"/>
</dbReference>
<dbReference type="GO" id="GO:0019464">
    <property type="term" value="P:glycine decarboxylation via glycine cleavage system"/>
    <property type="evidence" value="ECO:0007669"/>
    <property type="project" value="UniProtKB-UniRule"/>
</dbReference>
<dbReference type="FunFam" id="2.40.30.110:FF:000001">
    <property type="entry name" value="Aminomethyltransferase"/>
    <property type="match status" value="1"/>
</dbReference>
<dbReference type="FunFam" id="3.30.70.1400:FF:000001">
    <property type="entry name" value="Aminomethyltransferase"/>
    <property type="match status" value="1"/>
</dbReference>
<dbReference type="FunFam" id="4.10.1250.10:FF:000001">
    <property type="entry name" value="Aminomethyltransferase"/>
    <property type="match status" value="1"/>
</dbReference>
<dbReference type="Gene3D" id="2.40.30.110">
    <property type="entry name" value="Aminomethyltransferase beta-barrel domains"/>
    <property type="match status" value="1"/>
</dbReference>
<dbReference type="Gene3D" id="3.30.70.1400">
    <property type="entry name" value="Aminomethyltransferase beta-barrel domains"/>
    <property type="match status" value="1"/>
</dbReference>
<dbReference type="Gene3D" id="4.10.1250.10">
    <property type="entry name" value="Aminomethyltransferase fragment"/>
    <property type="match status" value="1"/>
</dbReference>
<dbReference type="Gene3D" id="3.30.1360.120">
    <property type="entry name" value="Probable tRNA modification gtpase trme, domain 1"/>
    <property type="match status" value="1"/>
</dbReference>
<dbReference type="HAMAP" id="MF_00259">
    <property type="entry name" value="GcvT"/>
    <property type="match status" value="1"/>
</dbReference>
<dbReference type="InterPro" id="IPR006223">
    <property type="entry name" value="GCS_T"/>
</dbReference>
<dbReference type="InterPro" id="IPR022903">
    <property type="entry name" value="GCS_T_bac"/>
</dbReference>
<dbReference type="InterPro" id="IPR013977">
    <property type="entry name" value="GCST_C"/>
</dbReference>
<dbReference type="InterPro" id="IPR006222">
    <property type="entry name" value="GCV_T_N"/>
</dbReference>
<dbReference type="InterPro" id="IPR028896">
    <property type="entry name" value="GcvT/YgfZ/DmdA"/>
</dbReference>
<dbReference type="InterPro" id="IPR029043">
    <property type="entry name" value="GcvT/YgfZ_C"/>
</dbReference>
<dbReference type="InterPro" id="IPR027266">
    <property type="entry name" value="TrmE/GcvT_dom1"/>
</dbReference>
<dbReference type="NCBIfam" id="TIGR00528">
    <property type="entry name" value="gcvT"/>
    <property type="match status" value="1"/>
</dbReference>
<dbReference type="NCBIfam" id="NF001567">
    <property type="entry name" value="PRK00389.1"/>
    <property type="match status" value="1"/>
</dbReference>
<dbReference type="PANTHER" id="PTHR43757">
    <property type="entry name" value="AMINOMETHYLTRANSFERASE"/>
    <property type="match status" value="1"/>
</dbReference>
<dbReference type="PANTHER" id="PTHR43757:SF2">
    <property type="entry name" value="AMINOMETHYLTRANSFERASE, MITOCHONDRIAL"/>
    <property type="match status" value="1"/>
</dbReference>
<dbReference type="Pfam" id="PF01571">
    <property type="entry name" value="GCV_T"/>
    <property type="match status" value="1"/>
</dbReference>
<dbReference type="Pfam" id="PF08669">
    <property type="entry name" value="GCV_T_C"/>
    <property type="match status" value="1"/>
</dbReference>
<dbReference type="PIRSF" id="PIRSF006487">
    <property type="entry name" value="GcvT"/>
    <property type="match status" value="1"/>
</dbReference>
<dbReference type="SUPFAM" id="SSF101790">
    <property type="entry name" value="Aminomethyltransferase beta-barrel domain"/>
    <property type="match status" value="1"/>
</dbReference>
<dbReference type="SUPFAM" id="SSF103025">
    <property type="entry name" value="Folate-binding domain"/>
    <property type="match status" value="1"/>
</dbReference>
<keyword id="KW-0032">Aminotransferase</keyword>
<keyword id="KW-0808">Transferase</keyword>
<name>GCST_SALA4</name>
<accession>B5F5I0</accession>
<reference key="1">
    <citation type="journal article" date="2011" name="J. Bacteriol.">
        <title>Comparative genomics of 28 Salmonella enterica isolates: evidence for CRISPR-mediated adaptive sublineage evolution.</title>
        <authorList>
            <person name="Fricke W.F."/>
            <person name="Mammel M.K."/>
            <person name="McDermott P.F."/>
            <person name="Tartera C."/>
            <person name="White D.G."/>
            <person name="Leclerc J.E."/>
            <person name="Ravel J."/>
            <person name="Cebula T.A."/>
        </authorList>
    </citation>
    <scope>NUCLEOTIDE SEQUENCE [LARGE SCALE GENOMIC DNA]</scope>
    <source>
        <strain>SL483</strain>
    </source>
</reference>
<sequence length="364" mass="40217">MAQQTPLYEQHTLCGARMVDFHGWMMPLHYGSQLDEHHAVRTDAGMFDVSHMTIVDLHGSRTREFLRYLLANDVAKLTKTGKALYSGMLNASGGVIDDLIVYYFTEDFFRLVVNSATREKDLSWITQHAEPYAIDITVRDDLSLIAVQGPNAQEKAATLFTDQQRHAVEGMKPFFGVQAGDLFIATTGYTGEAGYEIAMPNEKAADFWRALVEAGVKPCGLGARDTLRLEAGMNLYGQEMDEGISPLAANMGWTIAWEPADRDFIGREALEMQREKGHEQLVGLVMTEKGVLRNELPVRFTDAQGNQQEGIITSGTFSPTLGYSIALARVPAGIGETAIVQIRNREMPVKVTKPVFVRNGKAVA</sequence>
<evidence type="ECO:0000255" key="1">
    <source>
        <dbReference type="HAMAP-Rule" id="MF_00259"/>
    </source>
</evidence>
<proteinExistence type="inferred from homology"/>